<accession>A1VJ84</accession>
<protein>
    <recommendedName>
        <fullName evidence="1">Chaperonin GroEL 1</fullName>
        <ecNumber evidence="1">5.6.1.7</ecNumber>
    </recommendedName>
    <alternativeName>
        <fullName evidence="1">60 kDa chaperonin 1</fullName>
    </alternativeName>
    <alternativeName>
        <fullName evidence="1">Chaperonin-60 1</fullName>
        <shortName evidence="1">Cpn60 1</shortName>
    </alternativeName>
</protein>
<keyword id="KW-0067">ATP-binding</keyword>
<keyword id="KW-0143">Chaperone</keyword>
<keyword id="KW-0963">Cytoplasm</keyword>
<keyword id="KW-0413">Isomerase</keyword>
<keyword id="KW-0547">Nucleotide-binding</keyword>
<keyword id="KW-1185">Reference proteome</keyword>
<organism>
    <name type="scientific">Polaromonas naphthalenivorans (strain CJ2)</name>
    <dbReference type="NCBI Taxonomy" id="365044"/>
    <lineage>
        <taxon>Bacteria</taxon>
        <taxon>Pseudomonadati</taxon>
        <taxon>Pseudomonadota</taxon>
        <taxon>Betaproteobacteria</taxon>
        <taxon>Burkholderiales</taxon>
        <taxon>Comamonadaceae</taxon>
        <taxon>Polaromonas</taxon>
    </lineage>
</organism>
<dbReference type="EC" id="5.6.1.7" evidence="1"/>
<dbReference type="EMBL" id="CP000529">
    <property type="protein sequence ID" value="ABM35712.1"/>
    <property type="molecule type" value="Genomic_DNA"/>
</dbReference>
<dbReference type="RefSeq" id="WP_011799815.1">
    <property type="nucleotide sequence ID" value="NC_008781.1"/>
</dbReference>
<dbReference type="SMR" id="A1VJ84"/>
<dbReference type="STRING" id="365044.Pnap_0389"/>
<dbReference type="KEGG" id="pna:Pnap_0389"/>
<dbReference type="eggNOG" id="COG0459">
    <property type="taxonomic scope" value="Bacteria"/>
</dbReference>
<dbReference type="HOGENOM" id="CLU_016503_3_0_4"/>
<dbReference type="OrthoDB" id="9766614at2"/>
<dbReference type="Proteomes" id="UP000000644">
    <property type="component" value="Chromosome"/>
</dbReference>
<dbReference type="GO" id="GO:0005737">
    <property type="term" value="C:cytoplasm"/>
    <property type="evidence" value="ECO:0007669"/>
    <property type="project" value="UniProtKB-SubCell"/>
</dbReference>
<dbReference type="GO" id="GO:0005524">
    <property type="term" value="F:ATP binding"/>
    <property type="evidence" value="ECO:0007669"/>
    <property type="project" value="UniProtKB-UniRule"/>
</dbReference>
<dbReference type="GO" id="GO:0140662">
    <property type="term" value="F:ATP-dependent protein folding chaperone"/>
    <property type="evidence" value="ECO:0007669"/>
    <property type="project" value="InterPro"/>
</dbReference>
<dbReference type="GO" id="GO:0016853">
    <property type="term" value="F:isomerase activity"/>
    <property type="evidence" value="ECO:0007669"/>
    <property type="project" value="UniProtKB-KW"/>
</dbReference>
<dbReference type="GO" id="GO:0051082">
    <property type="term" value="F:unfolded protein binding"/>
    <property type="evidence" value="ECO:0007669"/>
    <property type="project" value="UniProtKB-UniRule"/>
</dbReference>
<dbReference type="GO" id="GO:0042026">
    <property type="term" value="P:protein refolding"/>
    <property type="evidence" value="ECO:0007669"/>
    <property type="project" value="UniProtKB-UniRule"/>
</dbReference>
<dbReference type="CDD" id="cd03344">
    <property type="entry name" value="GroEL"/>
    <property type="match status" value="1"/>
</dbReference>
<dbReference type="FunFam" id="3.50.7.10:FF:000001">
    <property type="entry name" value="60 kDa chaperonin"/>
    <property type="match status" value="1"/>
</dbReference>
<dbReference type="Gene3D" id="3.50.7.10">
    <property type="entry name" value="GroEL"/>
    <property type="match status" value="1"/>
</dbReference>
<dbReference type="Gene3D" id="1.10.560.10">
    <property type="entry name" value="GroEL-like equatorial domain"/>
    <property type="match status" value="1"/>
</dbReference>
<dbReference type="Gene3D" id="3.30.260.10">
    <property type="entry name" value="TCP-1-like chaperonin intermediate domain"/>
    <property type="match status" value="1"/>
</dbReference>
<dbReference type="HAMAP" id="MF_00600">
    <property type="entry name" value="CH60"/>
    <property type="match status" value="1"/>
</dbReference>
<dbReference type="InterPro" id="IPR018370">
    <property type="entry name" value="Chaperonin_Cpn60_CS"/>
</dbReference>
<dbReference type="InterPro" id="IPR001844">
    <property type="entry name" value="Cpn60/GroEL"/>
</dbReference>
<dbReference type="InterPro" id="IPR002423">
    <property type="entry name" value="Cpn60/GroEL/TCP-1"/>
</dbReference>
<dbReference type="InterPro" id="IPR027409">
    <property type="entry name" value="GroEL-like_apical_dom_sf"/>
</dbReference>
<dbReference type="InterPro" id="IPR027413">
    <property type="entry name" value="GROEL-like_equatorial_sf"/>
</dbReference>
<dbReference type="InterPro" id="IPR027410">
    <property type="entry name" value="TCP-1-like_intermed_sf"/>
</dbReference>
<dbReference type="NCBIfam" id="TIGR02348">
    <property type="entry name" value="GroEL"/>
    <property type="match status" value="1"/>
</dbReference>
<dbReference type="NCBIfam" id="NF000592">
    <property type="entry name" value="PRK00013.1"/>
    <property type="match status" value="1"/>
</dbReference>
<dbReference type="NCBIfam" id="NF009487">
    <property type="entry name" value="PRK12849.1"/>
    <property type="match status" value="1"/>
</dbReference>
<dbReference type="NCBIfam" id="NF009488">
    <property type="entry name" value="PRK12850.1"/>
    <property type="match status" value="1"/>
</dbReference>
<dbReference type="NCBIfam" id="NF009489">
    <property type="entry name" value="PRK12851.1"/>
    <property type="match status" value="1"/>
</dbReference>
<dbReference type="PANTHER" id="PTHR45633">
    <property type="entry name" value="60 KDA HEAT SHOCK PROTEIN, MITOCHONDRIAL"/>
    <property type="match status" value="1"/>
</dbReference>
<dbReference type="Pfam" id="PF00118">
    <property type="entry name" value="Cpn60_TCP1"/>
    <property type="match status" value="1"/>
</dbReference>
<dbReference type="PRINTS" id="PR00298">
    <property type="entry name" value="CHAPERONIN60"/>
</dbReference>
<dbReference type="SUPFAM" id="SSF52029">
    <property type="entry name" value="GroEL apical domain-like"/>
    <property type="match status" value="1"/>
</dbReference>
<dbReference type="SUPFAM" id="SSF48592">
    <property type="entry name" value="GroEL equatorial domain-like"/>
    <property type="match status" value="1"/>
</dbReference>
<dbReference type="SUPFAM" id="SSF54849">
    <property type="entry name" value="GroEL-intermediate domain like"/>
    <property type="match status" value="1"/>
</dbReference>
<dbReference type="PROSITE" id="PS00296">
    <property type="entry name" value="CHAPERONINS_CPN60"/>
    <property type="match status" value="1"/>
</dbReference>
<feature type="chain" id="PRO_0000332036" description="Chaperonin GroEL 1">
    <location>
        <begin position="1"/>
        <end position="544"/>
    </location>
</feature>
<feature type="binding site" evidence="1">
    <location>
        <begin position="30"/>
        <end position="33"/>
    </location>
    <ligand>
        <name>ATP</name>
        <dbReference type="ChEBI" id="CHEBI:30616"/>
    </ligand>
</feature>
<feature type="binding site" evidence="1">
    <location>
        <begin position="87"/>
        <end position="91"/>
    </location>
    <ligand>
        <name>ATP</name>
        <dbReference type="ChEBI" id="CHEBI:30616"/>
    </ligand>
</feature>
<feature type="binding site" evidence="1">
    <location>
        <position position="415"/>
    </location>
    <ligand>
        <name>ATP</name>
        <dbReference type="ChEBI" id="CHEBI:30616"/>
    </ligand>
</feature>
<feature type="binding site" evidence="1">
    <location>
        <begin position="480"/>
        <end position="482"/>
    </location>
    <ligand>
        <name>ATP</name>
        <dbReference type="ChEBI" id="CHEBI:30616"/>
    </ligand>
</feature>
<feature type="binding site" evidence="1">
    <location>
        <position position="496"/>
    </location>
    <ligand>
        <name>ATP</name>
        <dbReference type="ChEBI" id="CHEBI:30616"/>
    </ligand>
</feature>
<reference key="1">
    <citation type="journal article" date="2009" name="Environ. Microbiol.">
        <title>The genome of Polaromonas naphthalenivorans strain CJ2, isolated from coal tar-contaminated sediment, reveals physiological and metabolic versatility and evolution through extensive horizontal gene transfer.</title>
        <authorList>
            <person name="Yagi J.M."/>
            <person name="Sims D."/>
            <person name="Brettin T."/>
            <person name="Bruce D."/>
            <person name="Madsen E.L."/>
        </authorList>
    </citation>
    <scope>NUCLEOTIDE SEQUENCE [LARGE SCALE GENOMIC DNA]</scope>
    <source>
        <strain>CJ2</strain>
    </source>
</reference>
<evidence type="ECO:0000255" key="1">
    <source>
        <dbReference type="HAMAP-Rule" id="MF_00600"/>
    </source>
</evidence>
<comment type="function">
    <text evidence="1">Together with its co-chaperonin GroES, plays an essential role in assisting protein folding. The GroEL-GroES system forms a nano-cage that allows encapsulation of the non-native substrate proteins and provides a physical environment optimized to promote and accelerate protein folding.</text>
</comment>
<comment type="catalytic activity">
    <reaction evidence="1">
        <text>ATP + H2O + a folded polypeptide = ADP + phosphate + an unfolded polypeptide.</text>
        <dbReference type="EC" id="5.6.1.7"/>
    </reaction>
</comment>
<comment type="subunit">
    <text evidence="1">Forms a cylinder of 14 subunits composed of two heptameric rings stacked back-to-back. Interacts with the co-chaperonin GroES.</text>
</comment>
<comment type="subcellular location">
    <subcellularLocation>
        <location evidence="1">Cytoplasm</location>
    </subcellularLocation>
</comment>
<comment type="similarity">
    <text evidence="1">Belongs to the chaperonin (HSP60) family.</text>
</comment>
<sequence>MKPKQLIFHDAARGKIWRGVEALAEAVKVTLGPRGRTVILERDFGPPQIVNSGVLVAKSIELEDRFENMGAQLLREVAARTSEMAGDGTTTATVLAHGMIQEGLRYLAGGMNPMDLKRGIELAIDTVVAELQRMAKPCASSQEIAHVAAISANNDRSIGDLLASAIDKVGREGAISIEDGSGLVSVLEVVEGMQFDRGFLSPYFINNAERQSAVLEDVSILLCEGRLTSLNDLLPLLEEVVKAGRPLLVIAEDVDSDSLAALVINTMRGTLKTCAVKAPGFGDRRKAMVQDIAVLTGGTVVSDEVGLTLGKVRLQDLGRATRAEITKESTTLIGGAGKPQAIRDRIATIRKERELAASDYDREKLDERAAKLSGGVALIKVGAATETELKERKLRVEDALHATRAAVEEGIVPGGGVALLRARRTLAGLTGGTLDETSGIRLVSRALEEPLRRIVSNAGDEPSVILNRVDESPDPAFGYNAATRAYGDLLQMGVIDPAKVTRLALQNAASIASLILTTDCMIATAPKPSSEEGALNPEGSSPMF</sequence>
<proteinExistence type="inferred from homology"/>
<name>CH601_POLNA</name>
<gene>
    <name evidence="1" type="primary">groEL1</name>
    <name evidence="1" type="synonym">groL1</name>
    <name type="ordered locus">Pnap_0389</name>
</gene>